<gene>
    <name evidence="1" type="primary">fabZ</name>
    <name type="ordered locus">PA3645</name>
</gene>
<dbReference type="EC" id="4.2.1.59" evidence="1"/>
<dbReference type="EMBL" id="AE004091">
    <property type="protein sequence ID" value="AAG07033.1"/>
    <property type="molecule type" value="Genomic_DNA"/>
</dbReference>
<dbReference type="PIR" id="E83190">
    <property type="entry name" value="E83190"/>
</dbReference>
<dbReference type="RefSeq" id="NP_252335.1">
    <property type="nucleotide sequence ID" value="NC_002516.2"/>
</dbReference>
<dbReference type="RefSeq" id="WP_003092375.1">
    <property type="nucleotide sequence ID" value="NZ_QZGE01000001.1"/>
</dbReference>
<dbReference type="PDB" id="1U1Z">
    <property type="method" value="X-ray"/>
    <property type="resolution" value="2.50 A"/>
    <property type="chains" value="A/B/C/D/E/F=1-146"/>
</dbReference>
<dbReference type="PDBsum" id="1U1Z"/>
<dbReference type="SMR" id="Q9HXY7"/>
<dbReference type="FunCoup" id="Q9HXY7">
    <property type="interactions" value="570"/>
</dbReference>
<dbReference type="STRING" id="208964.PA3645"/>
<dbReference type="PaxDb" id="208964-PA3645"/>
<dbReference type="DNASU" id="880494"/>
<dbReference type="GeneID" id="77219874"/>
<dbReference type="GeneID" id="880494"/>
<dbReference type="KEGG" id="pae:PA3645"/>
<dbReference type="PATRIC" id="fig|208964.12.peg.3814"/>
<dbReference type="PseudoCAP" id="PA3645"/>
<dbReference type="HOGENOM" id="CLU_078912_1_0_6"/>
<dbReference type="InParanoid" id="Q9HXY7"/>
<dbReference type="OrthoDB" id="9772788at2"/>
<dbReference type="PhylomeDB" id="Q9HXY7"/>
<dbReference type="BioCyc" id="PAER208964:G1FZ6-3715-MONOMER"/>
<dbReference type="EvolutionaryTrace" id="Q9HXY7"/>
<dbReference type="Proteomes" id="UP000002438">
    <property type="component" value="Chromosome"/>
</dbReference>
<dbReference type="GO" id="GO:0005737">
    <property type="term" value="C:cytoplasm"/>
    <property type="evidence" value="ECO:0007669"/>
    <property type="project" value="UniProtKB-SubCell"/>
</dbReference>
<dbReference type="GO" id="GO:0016020">
    <property type="term" value="C:membrane"/>
    <property type="evidence" value="ECO:0007669"/>
    <property type="project" value="GOC"/>
</dbReference>
<dbReference type="GO" id="GO:0019171">
    <property type="term" value="F:(3R)-hydroxyacyl-[acyl-carrier-protein] dehydratase activity"/>
    <property type="evidence" value="ECO:0007669"/>
    <property type="project" value="UniProtKB-EC"/>
</dbReference>
<dbReference type="GO" id="GO:0006633">
    <property type="term" value="P:fatty acid biosynthetic process"/>
    <property type="evidence" value="ECO:0007669"/>
    <property type="project" value="UniProtKB-UniRule"/>
</dbReference>
<dbReference type="GO" id="GO:0009245">
    <property type="term" value="P:lipid A biosynthetic process"/>
    <property type="evidence" value="ECO:0007669"/>
    <property type="project" value="UniProtKB-UniRule"/>
</dbReference>
<dbReference type="CDD" id="cd01288">
    <property type="entry name" value="FabZ"/>
    <property type="match status" value="1"/>
</dbReference>
<dbReference type="FunFam" id="3.10.129.10:FF:000001">
    <property type="entry name" value="3-hydroxyacyl-[acyl-carrier-protein] dehydratase FabZ"/>
    <property type="match status" value="1"/>
</dbReference>
<dbReference type="Gene3D" id="3.10.129.10">
    <property type="entry name" value="Hotdog Thioesterase"/>
    <property type="match status" value="1"/>
</dbReference>
<dbReference type="HAMAP" id="MF_00406">
    <property type="entry name" value="FabZ"/>
    <property type="match status" value="1"/>
</dbReference>
<dbReference type="InterPro" id="IPR013114">
    <property type="entry name" value="FabA_FabZ"/>
</dbReference>
<dbReference type="InterPro" id="IPR010084">
    <property type="entry name" value="FabZ"/>
</dbReference>
<dbReference type="InterPro" id="IPR029069">
    <property type="entry name" value="HotDog_dom_sf"/>
</dbReference>
<dbReference type="NCBIfam" id="TIGR01750">
    <property type="entry name" value="fabZ"/>
    <property type="match status" value="1"/>
</dbReference>
<dbReference type="NCBIfam" id="NF000582">
    <property type="entry name" value="PRK00006.1"/>
    <property type="match status" value="1"/>
</dbReference>
<dbReference type="PANTHER" id="PTHR30272">
    <property type="entry name" value="3-HYDROXYACYL-[ACYL-CARRIER-PROTEIN] DEHYDRATASE"/>
    <property type="match status" value="1"/>
</dbReference>
<dbReference type="PANTHER" id="PTHR30272:SF1">
    <property type="entry name" value="3-HYDROXYACYL-[ACYL-CARRIER-PROTEIN] DEHYDRATASE"/>
    <property type="match status" value="1"/>
</dbReference>
<dbReference type="Pfam" id="PF07977">
    <property type="entry name" value="FabA"/>
    <property type="match status" value="1"/>
</dbReference>
<dbReference type="SUPFAM" id="SSF54637">
    <property type="entry name" value="Thioesterase/thiol ester dehydrase-isomerase"/>
    <property type="match status" value="1"/>
</dbReference>
<comment type="function">
    <text evidence="1">Involved in unsaturated fatty acids biosynthesis. Catalyzes the dehydration of short chain beta-hydroxyacyl-ACPs and long chain saturated and unsaturated beta-hydroxyacyl-ACPs.</text>
</comment>
<comment type="catalytic activity">
    <reaction evidence="1">
        <text>a (3R)-hydroxyacyl-[ACP] = a (2E)-enoyl-[ACP] + H2O</text>
        <dbReference type="Rhea" id="RHEA:13097"/>
        <dbReference type="Rhea" id="RHEA-COMP:9925"/>
        <dbReference type="Rhea" id="RHEA-COMP:9945"/>
        <dbReference type="ChEBI" id="CHEBI:15377"/>
        <dbReference type="ChEBI" id="CHEBI:78784"/>
        <dbReference type="ChEBI" id="CHEBI:78827"/>
        <dbReference type="EC" id="4.2.1.59"/>
    </reaction>
</comment>
<comment type="subcellular location">
    <subcellularLocation>
        <location evidence="1">Cytoplasm</location>
    </subcellularLocation>
</comment>
<comment type="similarity">
    <text evidence="1">Belongs to the thioester dehydratase family. FabZ subfamily.</text>
</comment>
<organism>
    <name type="scientific">Pseudomonas aeruginosa (strain ATCC 15692 / DSM 22644 / CIP 104116 / JCM 14847 / LMG 12228 / 1C / PRS 101 / PAO1)</name>
    <dbReference type="NCBI Taxonomy" id="208964"/>
    <lineage>
        <taxon>Bacteria</taxon>
        <taxon>Pseudomonadati</taxon>
        <taxon>Pseudomonadota</taxon>
        <taxon>Gammaproteobacteria</taxon>
        <taxon>Pseudomonadales</taxon>
        <taxon>Pseudomonadaceae</taxon>
        <taxon>Pseudomonas</taxon>
    </lineage>
</organism>
<feature type="chain" id="PRO_0000091713" description="3-hydroxyacyl-[acyl-carrier-protein] dehydratase FabZ">
    <location>
        <begin position="1"/>
        <end position="146"/>
    </location>
</feature>
<feature type="active site" evidence="1">
    <location>
        <position position="49"/>
    </location>
</feature>
<feature type="helix" evidence="2">
    <location>
        <begin position="4"/>
        <end position="7"/>
    </location>
</feature>
<feature type="turn" evidence="2">
    <location>
        <begin position="8"/>
        <end position="10"/>
    </location>
</feature>
<feature type="strand" evidence="2">
    <location>
        <begin position="22"/>
        <end position="27"/>
    </location>
</feature>
<feature type="turn" evidence="2">
    <location>
        <begin position="28"/>
        <end position="31"/>
    </location>
</feature>
<feature type="strand" evidence="2">
    <location>
        <begin position="32"/>
        <end position="38"/>
    </location>
</feature>
<feature type="helix" evidence="2">
    <location>
        <begin position="46"/>
        <end position="48"/>
    </location>
</feature>
<feature type="helix" evidence="2">
    <location>
        <begin position="58"/>
        <end position="77"/>
    </location>
</feature>
<feature type="strand" evidence="2">
    <location>
        <begin position="86"/>
        <end position="97"/>
    </location>
</feature>
<feature type="strand" evidence="2">
    <location>
        <begin position="106"/>
        <end position="117"/>
    </location>
</feature>
<feature type="strand" evidence="2">
    <location>
        <begin position="120"/>
        <end position="129"/>
    </location>
</feature>
<feature type="strand" evidence="2">
    <location>
        <begin position="132"/>
        <end position="144"/>
    </location>
</feature>
<accession>Q9HXY7</accession>
<keyword id="KW-0002">3D-structure</keyword>
<keyword id="KW-0963">Cytoplasm</keyword>
<keyword id="KW-0441">Lipid A biosynthesis</keyword>
<keyword id="KW-0444">Lipid biosynthesis</keyword>
<keyword id="KW-0443">Lipid metabolism</keyword>
<keyword id="KW-0456">Lyase</keyword>
<keyword id="KW-1185">Reference proteome</keyword>
<evidence type="ECO:0000255" key="1">
    <source>
        <dbReference type="HAMAP-Rule" id="MF_00406"/>
    </source>
</evidence>
<evidence type="ECO:0007829" key="2">
    <source>
        <dbReference type="PDB" id="1U1Z"/>
    </source>
</evidence>
<proteinExistence type="evidence at protein level"/>
<reference key="1">
    <citation type="journal article" date="2000" name="Nature">
        <title>Complete genome sequence of Pseudomonas aeruginosa PAO1, an opportunistic pathogen.</title>
        <authorList>
            <person name="Stover C.K."/>
            <person name="Pham X.-Q.T."/>
            <person name="Erwin A.L."/>
            <person name="Mizoguchi S.D."/>
            <person name="Warrener P."/>
            <person name="Hickey M.J."/>
            <person name="Brinkman F.S.L."/>
            <person name="Hufnagle W.O."/>
            <person name="Kowalik D.J."/>
            <person name="Lagrou M."/>
            <person name="Garber R.L."/>
            <person name="Goltry L."/>
            <person name="Tolentino E."/>
            <person name="Westbrock-Wadman S."/>
            <person name="Yuan Y."/>
            <person name="Brody L.L."/>
            <person name="Coulter S.N."/>
            <person name="Folger K.R."/>
            <person name="Kas A."/>
            <person name="Larbig K."/>
            <person name="Lim R.M."/>
            <person name="Smith K.A."/>
            <person name="Spencer D.H."/>
            <person name="Wong G.K.-S."/>
            <person name="Wu Z."/>
            <person name="Paulsen I.T."/>
            <person name="Reizer J."/>
            <person name="Saier M.H. Jr."/>
            <person name="Hancock R.E.W."/>
            <person name="Lory S."/>
            <person name="Olson M.V."/>
        </authorList>
    </citation>
    <scope>NUCLEOTIDE SEQUENCE [LARGE SCALE GENOMIC DNA]</scope>
    <source>
        <strain>ATCC 15692 / DSM 22644 / CIP 104116 / JCM 14847 / LMG 12228 / 1C / PRS 101 / PAO1</strain>
    </source>
</reference>
<sequence length="146" mass="16774">MMDINEIREYLPHRYPFLLVDRVVELDIEGKRIRAYKNVSINEPFFNGHFPEHPIMPGVLIIEAMAQAAGILGFKMLDVKPADGTLYYFVGSDKLRFRQPVLPGDQLQLHAKFISVKRSIWKFDCHATVDDKPVCSAEIICAERKL</sequence>
<protein>
    <recommendedName>
        <fullName evidence="1">3-hydroxyacyl-[acyl-carrier-protein] dehydratase FabZ</fullName>
        <ecNumber evidence="1">4.2.1.59</ecNumber>
    </recommendedName>
    <alternativeName>
        <fullName evidence="1">(3R)-hydroxymyristoyl-[acyl-carrier-protein] dehydratase</fullName>
        <shortName evidence="1">(3R)-hydroxymyristoyl-ACP dehydrase</shortName>
    </alternativeName>
    <alternativeName>
        <fullName evidence="1">Beta-hydroxyacyl-ACP dehydratase</fullName>
    </alternativeName>
</protein>
<name>FABZ_PSEAE</name>